<protein>
    <recommendedName>
        <fullName>Anoctamin-9</fullName>
    </recommendedName>
    <alternativeName>
        <fullName>Transmembrane protein 16J</fullName>
    </alternativeName>
    <alternativeName>
        <fullName>Tumor protein p53-inducible protein 5</fullName>
    </alternativeName>
    <alternativeName>
        <fullName>p53-induced gene 5 protein</fullName>
    </alternativeName>
</protein>
<sequence length="782" mass="90333">MQGEESLRILVEPEGDSFPLMEISTCETEASEQWDYVLVAQRHTQRDPRQARQQQFLEELRRKGFHIKVIRDQKQVFFGIRADNSVFGLYRTLLLEPEGPAPHAELAAPTTIPVTTSLRIRIVNFVVMNNKTSAGETFEDLMKDGVFEARFPLHKGEGRLKKTWARWRHMFREQPVDEIRNYFGEKVALYFVWLGWYTYMLVPAALTGLLVFLSGFSLFEASQISKEICEAHDILMCPLGDHSRRYQRLSETCTFAKLTHLFDNDGTVVFAIFMALWATVFLEIWKRQRARVVLHWDLYVWDEEQEEMALQLINCPDYKLRPYQHSYLRSTVILVLTLLMICLMIGMAHVLVVYRVLASALFSSSAVPFLEEQVTTAVVVTGALVHYVTIIIMTKINRCVALKLCDFEMPRTFSERESRFTIRFFTLQFFTHFSSLIYIAFILGRINGHPGKSTRLAGLWKLEECHASGCMMDLFVQMAIIMGLKQTLSNCVEYLVPWVTHKCRSLRASESGHLPRDPELRDWRRNYLLNPVNTFSLFDEFMEMMIQYGFTTIFVAAFPLAPLLALFSNLVEIRLDAIKMVWLQRRLVPRKAKDIGTWLQVLETIGVLAVIANGMVIAFTSEFIPRVVYKYRYSPCLKEGNSTVDCLKGYVNHSLSVFHTKDFQDPDGIEGSENVTLCRYRDYRNPPDYNFSEQFWFLLAIRLAFVILFEHVALCIKLIAAWFVPDIPQSVKNKVLEVKYQRLREKMWHGRQRLGGVGAGSRPPMPAHPTPASIFSARSTDV</sequence>
<dbReference type="EMBL" id="AK074088">
    <property type="protein sequence ID" value="BAB84914.1"/>
    <property type="status" value="ALT_SEQ"/>
    <property type="molecule type" value="mRNA"/>
</dbReference>
<dbReference type="EMBL" id="AK096874">
    <property type="protein sequence ID" value="BAG53386.1"/>
    <property type="molecule type" value="mRNA"/>
</dbReference>
<dbReference type="EMBL" id="AK303642">
    <property type="protein sequence ID" value="BAG64646.1"/>
    <property type="molecule type" value="mRNA"/>
</dbReference>
<dbReference type="EMBL" id="AC138230">
    <property type="status" value="NOT_ANNOTATED_CDS"/>
    <property type="molecule type" value="Genomic_DNA"/>
</dbReference>
<dbReference type="EMBL" id="BC128557">
    <property type="protein sequence ID" value="AAI28558.1"/>
    <property type="molecule type" value="mRNA"/>
</dbReference>
<dbReference type="CCDS" id="CCDS31326.1">
    <molecule id="A1A5B4-1"/>
</dbReference>
<dbReference type="RefSeq" id="NP_001012302.2">
    <molecule id="A1A5B4-1"/>
    <property type="nucleotide sequence ID" value="NM_001012302.3"/>
</dbReference>
<dbReference type="RefSeq" id="XP_011518355.1">
    <property type="nucleotide sequence ID" value="XM_011520053.2"/>
</dbReference>
<dbReference type="SMR" id="A1A5B4"/>
<dbReference type="BioGRID" id="130747">
    <property type="interactions" value="6"/>
</dbReference>
<dbReference type="FunCoup" id="A1A5B4">
    <property type="interactions" value="441"/>
</dbReference>
<dbReference type="IntAct" id="A1A5B4">
    <property type="interactions" value="3"/>
</dbReference>
<dbReference type="MINT" id="A1A5B4"/>
<dbReference type="STRING" id="9606.ENSP00000332788"/>
<dbReference type="TCDB" id="1.A.17.1.5">
    <property type="family name" value="the calcium-dependent chloride channel (ca-clc) family"/>
</dbReference>
<dbReference type="GlyCosmos" id="A1A5B4">
    <property type="glycosylation" value="4 sites, No reported glycans"/>
</dbReference>
<dbReference type="GlyGen" id="A1A5B4">
    <property type="glycosylation" value="5 sites, 1 N-linked glycan (1 site)"/>
</dbReference>
<dbReference type="iPTMnet" id="A1A5B4"/>
<dbReference type="PhosphoSitePlus" id="A1A5B4"/>
<dbReference type="BioMuta" id="ANO9"/>
<dbReference type="jPOST" id="A1A5B4"/>
<dbReference type="MassIVE" id="A1A5B4"/>
<dbReference type="PaxDb" id="9606-ENSP00000332788"/>
<dbReference type="PeptideAtlas" id="A1A5B4"/>
<dbReference type="ProteomicsDB" id="110">
    <molecule id="A1A5B4-1"/>
</dbReference>
<dbReference type="ProteomicsDB" id="111">
    <molecule id="A1A5B4-2"/>
</dbReference>
<dbReference type="ProteomicsDB" id="112">
    <molecule id="A1A5B4-3"/>
</dbReference>
<dbReference type="Antibodypedia" id="58906">
    <property type="antibodies" value="67 antibodies from 20 providers"/>
</dbReference>
<dbReference type="DNASU" id="338440"/>
<dbReference type="Ensembl" id="ENST00000332826.7">
    <molecule id="A1A5B4-1"/>
    <property type="protein sequence ID" value="ENSP00000332788.6"/>
    <property type="gene ID" value="ENSG00000185101.13"/>
</dbReference>
<dbReference type="GeneID" id="338440"/>
<dbReference type="KEGG" id="hsa:338440"/>
<dbReference type="MANE-Select" id="ENST00000332826.7">
    <property type="protein sequence ID" value="ENSP00000332788.6"/>
    <property type="RefSeq nucleotide sequence ID" value="NM_001012302.3"/>
    <property type="RefSeq protein sequence ID" value="NP_001012302.2"/>
</dbReference>
<dbReference type="UCSC" id="uc001lpi.3">
    <molecule id="A1A5B4-1"/>
    <property type="organism name" value="human"/>
</dbReference>
<dbReference type="AGR" id="HGNC:20679"/>
<dbReference type="CTD" id="338440"/>
<dbReference type="DisGeNET" id="338440"/>
<dbReference type="GeneCards" id="ANO9"/>
<dbReference type="HGNC" id="HGNC:20679">
    <property type="gene designation" value="ANO9"/>
</dbReference>
<dbReference type="HPA" id="ENSG00000185101">
    <property type="expression patterns" value="Tissue enhanced (intestine, skin)"/>
</dbReference>
<dbReference type="MalaCards" id="ANO9"/>
<dbReference type="MIM" id="619963">
    <property type="type" value="gene"/>
</dbReference>
<dbReference type="neXtProt" id="NX_A1A5B4"/>
<dbReference type="OpenTargets" id="ENSG00000185101"/>
<dbReference type="PharmGKB" id="PA164715791"/>
<dbReference type="VEuPathDB" id="HostDB:ENSG00000185101"/>
<dbReference type="eggNOG" id="KOG2514">
    <property type="taxonomic scope" value="Eukaryota"/>
</dbReference>
<dbReference type="GeneTree" id="ENSGT00940000158300"/>
<dbReference type="HOGENOM" id="CLU_006685_3_1_1"/>
<dbReference type="InParanoid" id="A1A5B4"/>
<dbReference type="OMA" id="KTWARWR"/>
<dbReference type="OrthoDB" id="296386at2759"/>
<dbReference type="PAN-GO" id="A1A5B4">
    <property type="GO annotations" value="3 GO annotations based on evolutionary models"/>
</dbReference>
<dbReference type="TreeFam" id="TF314265"/>
<dbReference type="PathwayCommons" id="A1A5B4"/>
<dbReference type="Reactome" id="R-HSA-2672351">
    <property type="pathway name" value="Stimuli-sensing channels"/>
</dbReference>
<dbReference type="Reactome" id="R-HSA-9733458">
    <property type="pathway name" value="Induction of Cell-Cell Fusion"/>
</dbReference>
<dbReference type="SignaLink" id="A1A5B4"/>
<dbReference type="BioGRID-ORCS" id="338440">
    <property type="hits" value="17 hits in 1164 CRISPR screens"/>
</dbReference>
<dbReference type="ChiTaRS" id="ANO9">
    <property type="organism name" value="human"/>
</dbReference>
<dbReference type="GenomeRNAi" id="338440"/>
<dbReference type="Pharos" id="A1A5B4">
    <property type="development level" value="Tbio"/>
</dbReference>
<dbReference type="PRO" id="PR:A1A5B4"/>
<dbReference type="Proteomes" id="UP000005640">
    <property type="component" value="Chromosome 11"/>
</dbReference>
<dbReference type="RNAct" id="A1A5B4">
    <property type="molecule type" value="protein"/>
</dbReference>
<dbReference type="Bgee" id="ENSG00000185101">
    <property type="expression patterns" value="Expressed in mucosa of transverse colon and 126 other cell types or tissues"/>
</dbReference>
<dbReference type="GO" id="GO:0005783">
    <property type="term" value="C:endoplasmic reticulum"/>
    <property type="evidence" value="ECO:0000314"/>
    <property type="project" value="UniProtKB"/>
</dbReference>
<dbReference type="GO" id="GO:0005886">
    <property type="term" value="C:plasma membrane"/>
    <property type="evidence" value="ECO:0000314"/>
    <property type="project" value="UniProtKB"/>
</dbReference>
<dbReference type="GO" id="GO:0005262">
    <property type="term" value="F:calcium channel activity"/>
    <property type="evidence" value="ECO:0000315"/>
    <property type="project" value="UniProtKB"/>
</dbReference>
<dbReference type="GO" id="GO:0015267">
    <property type="term" value="F:channel activity"/>
    <property type="evidence" value="ECO:0000314"/>
    <property type="project" value="UniProtKB"/>
</dbReference>
<dbReference type="GO" id="GO:0005254">
    <property type="term" value="F:chloride channel activity"/>
    <property type="evidence" value="ECO:0000318"/>
    <property type="project" value="GO_Central"/>
</dbReference>
<dbReference type="GO" id="GO:0019869">
    <property type="term" value="F:chloride channel inhibitor activity"/>
    <property type="evidence" value="ECO:0000314"/>
    <property type="project" value="UniProtKB"/>
</dbReference>
<dbReference type="GO" id="GO:0005229">
    <property type="term" value="F:intracellularly calcium-gated chloride channel activity"/>
    <property type="evidence" value="ECO:0000315"/>
    <property type="project" value="UniProtKB"/>
</dbReference>
<dbReference type="GO" id="GO:0017128">
    <property type="term" value="F:phospholipid scramblase activity"/>
    <property type="evidence" value="ECO:0007669"/>
    <property type="project" value="Ensembl"/>
</dbReference>
<dbReference type="GO" id="GO:0046983">
    <property type="term" value="F:protein dimerization activity"/>
    <property type="evidence" value="ECO:0007669"/>
    <property type="project" value="InterPro"/>
</dbReference>
<dbReference type="GO" id="GO:0061591">
    <property type="term" value="P:calcium activated galactosylceramide scrambling"/>
    <property type="evidence" value="ECO:0007669"/>
    <property type="project" value="Ensembl"/>
</dbReference>
<dbReference type="GO" id="GO:0061590">
    <property type="term" value="P:calcium activated phosphatidylcholine scrambling"/>
    <property type="evidence" value="ECO:0007669"/>
    <property type="project" value="Ensembl"/>
</dbReference>
<dbReference type="GO" id="GO:0061589">
    <property type="term" value="P:calcium activated phosphatidylserine scrambling"/>
    <property type="evidence" value="ECO:0007669"/>
    <property type="project" value="Ensembl"/>
</dbReference>
<dbReference type="GO" id="GO:1902476">
    <property type="term" value="P:chloride transmembrane transport"/>
    <property type="evidence" value="ECO:0000315"/>
    <property type="project" value="UniProtKB"/>
</dbReference>
<dbReference type="GO" id="GO:0051649">
    <property type="term" value="P:establishment of localization in cell"/>
    <property type="evidence" value="ECO:0007669"/>
    <property type="project" value="Ensembl"/>
</dbReference>
<dbReference type="GO" id="GO:0006629">
    <property type="term" value="P:lipid metabolic process"/>
    <property type="evidence" value="ECO:0007669"/>
    <property type="project" value="UniProtKB-KW"/>
</dbReference>
<dbReference type="GO" id="GO:0034220">
    <property type="term" value="P:monoatomic ion transmembrane transport"/>
    <property type="evidence" value="ECO:0000304"/>
    <property type="project" value="Reactome"/>
</dbReference>
<dbReference type="GO" id="GO:0007608">
    <property type="term" value="P:sensory perception of smell"/>
    <property type="evidence" value="ECO:0007669"/>
    <property type="project" value="Ensembl"/>
</dbReference>
<dbReference type="InterPro" id="IPR032394">
    <property type="entry name" value="Anoct_dimer"/>
</dbReference>
<dbReference type="InterPro" id="IPR007632">
    <property type="entry name" value="Anoctamin"/>
</dbReference>
<dbReference type="InterPro" id="IPR049452">
    <property type="entry name" value="Anoctamin_TM"/>
</dbReference>
<dbReference type="PANTHER" id="PTHR12308">
    <property type="entry name" value="ANOCTAMIN"/>
    <property type="match status" value="1"/>
</dbReference>
<dbReference type="PANTHER" id="PTHR12308:SF37">
    <property type="entry name" value="ANOCTAMIN-9"/>
    <property type="match status" value="1"/>
</dbReference>
<dbReference type="Pfam" id="PF16178">
    <property type="entry name" value="Anoct_dimer"/>
    <property type="match status" value="1"/>
</dbReference>
<dbReference type="Pfam" id="PF04547">
    <property type="entry name" value="Anoctamin"/>
    <property type="match status" value="1"/>
</dbReference>
<organism>
    <name type="scientific">Homo sapiens</name>
    <name type="common">Human</name>
    <dbReference type="NCBI Taxonomy" id="9606"/>
    <lineage>
        <taxon>Eukaryota</taxon>
        <taxon>Metazoa</taxon>
        <taxon>Chordata</taxon>
        <taxon>Craniata</taxon>
        <taxon>Vertebrata</taxon>
        <taxon>Euteleostomi</taxon>
        <taxon>Mammalia</taxon>
        <taxon>Eutheria</taxon>
        <taxon>Euarchontoglires</taxon>
        <taxon>Primates</taxon>
        <taxon>Haplorrhini</taxon>
        <taxon>Catarrhini</taxon>
        <taxon>Hominidae</taxon>
        <taxon>Homo</taxon>
    </lineage>
</organism>
<accession>A1A5B4</accession>
<accession>B3KUC4</accession>
<accession>B4E134</accession>
<accession>Q8TEN4</accession>
<keyword id="KW-0025">Alternative splicing</keyword>
<keyword id="KW-1003">Cell membrane</keyword>
<keyword id="KW-0256">Endoplasmic reticulum</keyword>
<keyword id="KW-0325">Glycoprotein</keyword>
<keyword id="KW-0443">Lipid metabolism</keyword>
<keyword id="KW-0445">Lipid transport</keyword>
<keyword id="KW-0472">Membrane</keyword>
<keyword id="KW-0597">Phosphoprotein</keyword>
<keyword id="KW-1267">Proteomics identification</keyword>
<keyword id="KW-1185">Reference proteome</keyword>
<keyword id="KW-0812">Transmembrane</keyword>
<keyword id="KW-1133">Transmembrane helix</keyword>
<keyword id="KW-0813">Transport</keyword>
<evidence type="ECO:0000250" key="1">
    <source>
        <dbReference type="UniProtKB" id="P86044"/>
    </source>
</evidence>
<evidence type="ECO:0000255" key="2"/>
<evidence type="ECO:0000256" key="3">
    <source>
        <dbReference type="SAM" id="MobiDB-lite"/>
    </source>
</evidence>
<evidence type="ECO:0000269" key="4">
    <source>
    </source>
</evidence>
<evidence type="ECO:0000269" key="5">
    <source>
    </source>
</evidence>
<evidence type="ECO:0000269" key="6">
    <source>
    </source>
</evidence>
<evidence type="ECO:0000269" key="7">
    <source>
    </source>
</evidence>
<evidence type="ECO:0000269" key="8">
    <source>
    </source>
</evidence>
<evidence type="ECO:0000269" key="9">
    <source>
    </source>
</evidence>
<evidence type="ECO:0000269" key="10">
    <source>
    </source>
</evidence>
<evidence type="ECO:0000269" key="11">
    <source>
    </source>
</evidence>
<evidence type="ECO:0000269" key="12">
    <source>
    </source>
</evidence>
<evidence type="ECO:0000303" key="13">
    <source>
    </source>
</evidence>
<evidence type="ECO:0000305" key="14"/>
<reference key="1">
    <citation type="journal article" date="2003" name="DNA Res.">
        <title>Characterization of long cDNA clones from human adult spleen. II. The complete sequences of 81 cDNA clones.</title>
        <authorList>
            <person name="Jikuya H."/>
            <person name="Takano J."/>
            <person name="Kikuno R."/>
            <person name="Hirosawa M."/>
            <person name="Nagase T."/>
            <person name="Nomura N."/>
            <person name="Ohara O."/>
        </authorList>
    </citation>
    <scope>NUCLEOTIDE SEQUENCE [LARGE SCALE MRNA] (ISOFORM 1)</scope>
    <scope>VARIANTS VAL-391 AND ARG-399</scope>
    <source>
        <tissue>Spleen</tissue>
    </source>
</reference>
<reference key="2">
    <citation type="journal article" date="2004" name="Nat. Genet.">
        <title>Complete sequencing and characterization of 21,243 full-length human cDNAs.</title>
        <authorList>
            <person name="Ota T."/>
            <person name="Suzuki Y."/>
            <person name="Nishikawa T."/>
            <person name="Otsuki T."/>
            <person name="Sugiyama T."/>
            <person name="Irie R."/>
            <person name="Wakamatsu A."/>
            <person name="Hayashi K."/>
            <person name="Sato H."/>
            <person name="Nagai K."/>
            <person name="Kimura K."/>
            <person name="Makita H."/>
            <person name="Sekine M."/>
            <person name="Obayashi M."/>
            <person name="Nishi T."/>
            <person name="Shibahara T."/>
            <person name="Tanaka T."/>
            <person name="Ishii S."/>
            <person name="Yamamoto J."/>
            <person name="Saito K."/>
            <person name="Kawai Y."/>
            <person name="Isono Y."/>
            <person name="Nakamura Y."/>
            <person name="Nagahari K."/>
            <person name="Murakami K."/>
            <person name="Yasuda T."/>
            <person name="Iwayanagi T."/>
            <person name="Wagatsuma M."/>
            <person name="Shiratori A."/>
            <person name="Sudo H."/>
            <person name="Hosoiri T."/>
            <person name="Kaku Y."/>
            <person name="Kodaira H."/>
            <person name="Kondo H."/>
            <person name="Sugawara M."/>
            <person name="Takahashi M."/>
            <person name="Kanda K."/>
            <person name="Yokoi T."/>
            <person name="Furuya T."/>
            <person name="Kikkawa E."/>
            <person name="Omura Y."/>
            <person name="Abe K."/>
            <person name="Kamihara K."/>
            <person name="Katsuta N."/>
            <person name="Sato K."/>
            <person name="Tanikawa M."/>
            <person name="Yamazaki M."/>
            <person name="Ninomiya K."/>
            <person name="Ishibashi T."/>
            <person name="Yamashita H."/>
            <person name="Murakawa K."/>
            <person name="Fujimori K."/>
            <person name="Tanai H."/>
            <person name="Kimata M."/>
            <person name="Watanabe M."/>
            <person name="Hiraoka S."/>
            <person name="Chiba Y."/>
            <person name="Ishida S."/>
            <person name="Ono Y."/>
            <person name="Takiguchi S."/>
            <person name="Watanabe S."/>
            <person name="Yosida M."/>
            <person name="Hotuta T."/>
            <person name="Kusano J."/>
            <person name="Kanehori K."/>
            <person name="Takahashi-Fujii A."/>
            <person name="Hara H."/>
            <person name="Tanase T.-O."/>
            <person name="Nomura Y."/>
            <person name="Togiya S."/>
            <person name="Komai F."/>
            <person name="Hara R."/>
            <person name="Takeuchi K."/>
            <person name="Arita M."/>
            <person name="Imose N."/>
            <person name="Musashino K."/>
            <person name="Yuuki H."/>
            <person name="Oshima A."/>
            <person name="Sasaki N."/>
            <person name="Aotsuka S."/>
            <person name="Yoshikawa Y."/>
            <person name="Matsunawa H."/>
            <person name="Ichihara T."/>
            <person name="Shiohata N."/>
            <person name="Sano S."/>
            <person name="Moriya S."/>
            <person name="Momiyama H."/>
            <person name="Satoh N."/>
            <person name="Takami S."/>
            <person name="Terashima Y."/>
            <person name="Suzuki O."/>
            <person name="Nakagawa S."/>
            <person name="Senoh A."/>
            <person name="Mizoguchi H."/>
            <person name="Goto Y."/>
            <person name="Shimizu F."/>
            <person name="Wakebe H."/>
            <person name="Hishigaki H."/>
            <person name="Watanabe T."/>
            <person name="Sugiyama A."/>
            <person name="Takemoto M."/>
            <person name="Kawakami B."/>
            <person name="Yamazaki M."/>
            <person name="Watanabe K."/>
            <person name="Kumagai A."/>
            <person name="Itakura S."/>
            <person name="Fukuzumi Y."/>
            <person name="Fujimori Y."/>
            <person name="Komiyama M."/>
            <person name="Tashiro H."/>
            <person name="Tanigami A."/>
            <person name="Fujiwara T."/>
            <person name="Ono T."/>
            <person name="Yamada K."/>
            <person name="Fujii Y."/>
            <person name="Ozaki K."/>
            <person name="Hirao M."/>
            <person name="Ohmori Y."/>
            <person name="Kawabata A."/>
            <person name="Hikiji T."/>
            <person name="Kobatake N."/>
            <person name="Inagaki H."/>
            <person name="Ikema Y."/>
            <person name="Okamoto S."/>
            <person name="Okitani R."/>
            <person name="Kawakami T."/>
            <person name="Noguchi S."/>
            <person name="Itoh T."/>
            <person name="Shigeta K."/>
            <person name="Senba T."/>
            <person name="Matsumura K."/>
            <person name="Nakajima Y."/>
            <person name="Mizuno T."/>
            <person name="Morinaga M."/>
            <person name="Sasaki M."/>
            <person name="Togashi T."/>
            <person name="Oyama M."/>
            <person name="Hata H."/>
            <person name="Watanabe M."/>
            <person name="Komatsu T."/>
            <person name="Mizushima-Sugano J."/>
            <person name="Satoh T."/>
            <person name="Shirai Y."/>
            <person name="Takahashi Y."/>
            <person name="Nakagawa K."/>
            <person name="Okumura K."/>
            <person name="Nagase T."/>
            <person name="Nomura N."/>
            <person name="Kikuchi H."/>
            <person name="Masuho Y."/>
            <person name="Yamashita R."/>
            <person name="Nakai K."/>
            <person name="Yada T."/>
            <person name="Nakamura Y."/>
            <person name="Ohara O."/>
            <person name="Isogai T."/>
            <person name="Sugano S."/>
        </authorList>
    </citation>
    <scope>NUCLEOTIDE SEQUENCE [LARGE SCALE MRNA] (ISOFORMS 2 AND 3)</scope>
    <scope>VARIANTS VAL-391 AND ARG-399</scope>
    <source>
        <tissue>Salivary gland</tissue>
        <tissue>Thymus</tissue>
    </source>
</reference>
<reference key="3">
    <citation type="journal article" date="2006" name="Nature">
        <title>Human chromosome 11 DNA sequence and analysis including novel gene identification.</title>
        <authorList>
            <person name="Taylor T.D."/>
            <person name="Noguchi H."/>
            <person name="Totoki Y."/>
            <person name="Toyoda A."/>
            <person name="Kuroki Y."/>
            <person name="Dewar K."/>
            <person name="Lloyd C."/>
            <person name="Itoh T."/>
            <person name="Takeda T."/>
            <person name="Kim D.-W."/>
            <person name="She X."/>
            <person name="Barlow K.F."/>
            <person name="Bloom T."/>
            <person name="Bruford E."/>
            <person name="Chang J.L."/>
            <person name="Cuomo C.A."/>
            <person name="Eichler E."/>
            <person name="FitzGerald M.G."/>
            <person name="Jaffe D.B."/>
            <person name="LaButti K."/>
            <person name="Nicol R."/>
            <person name="Park H.-S."/>
            <person name="Seaman C."/>
            <person name="Sougnez C."/>
            <person name="Yang X."/>
            <person name="Zimmer A.R."/>
            <person name="Zody M.C."/>
            <person name="Birren B.W."/>
            <person name="Nusbaum C."/>
            <person name="Fujiyama A."/>
            <person name="Hattori M."/>
            <person name="Rogers J."/>
            <person name="Lander E.S."/>
            <person name="Sakaki Y."/>
        </authorList>
    </citation>
    <scope>NUCLEOTIDE SEQUENCE [LARGE SCALE GENOMIC DNA]</scope>
</reference>
<reference key="4">
    <citation type="journal article" date="2004" name="Genome Res.">
        <title>The status, quality, and expansion of the NIH full-length cDNA project: the Mammalian Gene Collection (MGC).</title>
        <authorList>
            <consortium name="The MGC Project Team"/>
        </authorList>
    </citation>
    <scope>NUCLEOTIDE SEQUENCE [LARGE SCALE MRNA] (ISOFORM 1)</scope>
    <scope>VARIANTS VAL-391 AND ARG-399</scope>
</reference>
<reference key="5">
    <citation type="journal article" date="2010" name="J. Biol. Chem.">
        <title>Expression and function of epithelial anoctamins.</title>
        <authorList>
            <person name="Schreiber R."/>
            <person name="Uliyakina I."/>
            <person name="Kongsuphol P."/>
            <person name="Warth R."/>
            <person name="Mirza M."/>
            <person name="Martins J.R."/>
            <person name="Kunzelmann K."/>
        </authorList>
    </citation>
    <scope>FUNCTION</scope>
    <scope>SUBCELLULAR LOCATION</scope>
</reference>
<reference key="6">
    <citation type="journal article" date="2011" name="Acta Pharmacol. Sin.">
        <title>Physiological roles and diseases of Tmem16/Anoctamin proteins: are they all chloride channels?</title>
        <authorList>
            <person name="Duran C."/>
            <person name="Hartzell H.C."/>
        </authorList>
    </citation>
    <scope>REVIEW</scope>
</reference>
<reference key="7">
    <citation type="journal article" date="2011" name="Cell. Physiol. Biochem.">
        <title>CFTR and TMEM16A are separate but functionally related Cl-channels.</title>
        <authorList>
            <person name="Ousingsawat J."/>
            <person name="Kongsuphol P."/>
            <person name="Schreiber R."/>
            <person name="Kunzelmann K."/>
        </authorList>
    </citation>
    <scope>ABSENCE OF CALCIUM-ACTIVATED CHLORIDE CHANNEL ACTIVITY</scope>
</reference>
<reference key="8">
    <citation type="journal article" date="2011" name="Pflugers Arch.">
        <title>Anoctamins.</title>
        <authorList>
            <person name="Kunzelmann K."/>
            <person name="Tian Y."/>
            <person name="Martins J.R."/>
            <person name="Faria D."/>
            <person name="Kongsuphol P."/>
            <person name="Ousingsawat J."/>
            <person name="Thevenod F."/>
            <person name="Roussa E."/>
            <person name="Rock J."/>
            <person name="Schreiber R."/>
        </authorList>
    </citation>
    <scope>REVIEW</scope>
</reference>
<reference key="9">
    <citation type="journal article" date="2012" name="Exp. Physiol.">
        <title>The anoctamin (TMEM16) gene family: calcium-activated chloride channels come of age.</title>
        <authorList>
            <person name="Winpenny J.P."/>
            <person name="Gray M.A."/>
        </authorList>
    </citation>
    <scope>REVIEW</scope>
</reference>
<reference key="10">
    <citation type="journal article" date="2012" name="Exp. Physiol.">
        <title>The anoctamin family: TMEM16A and TMEM16B as calcium-activated chloride channels.</title>
        <authorList>
            <person name="Scudieri P."/>
            <person name="Sondo E."/>
            <person name="Ferrera L."/>
            <person name="Galietta L.J."/>
        </authorList>
    </citation>
    <scope>REVIEW</scope>
    <scope>ABSENCE OF CALCIUM-ACTIVATED CHLORIDE CHANNEL ACTIVITY</scope>
</reference>
<reference key="11">
    <citation type="journal article" date="2012" name="J. Cell Sci.">
        <title>Anoctamins are a family of Ca2+ activated Cl- channels.</title>
        <authorList>
            <person name="Tian Y."/>
            <person name="Schreiber R."/>
            <person name="Kunzelmann K."/>
        </authorList>
    </citation>
    <scope>FUNCTION</scope>
    <scope>SUBCELLULAR LOCATION</scope>
</reference>
<reference key="12">
    <citation type="journal article" date="2018" name="Cell Calcium">
        <title>Anoctamin 9/TMEM16J is a cation channel activated by cAMP/PKA signal.</title>
        <authorList>
            <person name="Kim H."/>
            <person name="Kim H."/>
            <person name="Lee J."/>
            <person name="Lee B."/>
            <person name="Kim H.R."/>
            <person name="Jung J."/>
            <person name="Lee M.O."/>
            <person name="Oh U."/>
        </authorList>
    </citation>
    <scope>FUNCTION</scope>
    <scope>TRANSPORTER ACTIVITY</scope>
    <scope>SUBCELLULAR LOCATION</scope>
    <scope>ACTIVITY REGULATION</scope>
    <scope>PHOSPHORYLATION</scope>
</reference>
<reference key="13">
    <citation type="journal article" date="2022" name="Prog. Neurobiol.">
        <title>Amplification of olfactory signals by Anoctamin 9 is important for mammalian olfaction.</title>
        <authorList>
            <person name="Kim H."/>
            <person name="Kim H."/>
            <person name="Nguyen L.T."/>
            <person name="Ha T."/>
            <person name="Lim S."/>
            <person name="Kim K."/>
            <person name="Kim S.H."/>
            <person name="Han K."/>
            <person name="Hyeon S.J."/>
            <person name="Ryu H."/>
            <person name="Park Y.S."/>
            <person name="Kim S.H."/>
            <person name="Kim I.B."/>
            <person name="Hong G.S."/>
            <person name="Lee S.E."/>
            <person name="Choi Y."/>
            <person name="Cohen L.B."/>
            <person name="Oh U."/>
        </authorList>
    </citation>
    <scope>TISSUE SPECIFICITY</scope>
</reference>
<reference key="14">
    <citation type="journal article" date="2023" name="FASEB J.">
        <title>A TMEM16J variant leads to dysregulated cytosolic calcium which may lead to renal disease.</title>
        <authorList>
            <person name="Schreiber R."/>
            <person name="Talbi K."/>
            <person name="Ousingsawat J."/>
            <person name="Kunzelmann K."/>
        </authorList>
    </citation>
    <scope>CHARACTERIZATION OF VARIANT ALA-604</scope>
    <scope>FUNCTION</scope>
    <scope>TRANSPORTER ACTIVITY</scope>
    <scope>SUBCELLULAR LOCATION</scope>
    <scope>TISSUE SPECIFICITY</scope>
</reference>
<name>ANO9_HUMAN</name>
<proteinExistence type="evidence at protein level"/>
<comment type="function">
    <text evidence="1 7 8 9 10 12">PKA-activated nonselective cation channel (PubMed:29604966). Discriminates poorly among cations but is more permeable to Ca(2+) ions than to monovalent cations (By similarity). Acts as a calcium-activated calcium permeable channel which may operate as a endoplasmic reticulum (ER) Ca(2+)-leak channel, reducing the loading of the ER Ca(2+) store (PubMed:36520003). Regulates intracellular Ca2+ signals, ion channel activity, and cytokine release in the renal tissue (PubMed:36520003). Plays an important role in olfaction, amplifying cAMP-evoked cyclic nucleotide-gated (CNG) channel currents in the olfactory sensory neurons (By similarity). Has calcium-dependent phospholipid scramblase activity; scrambles phosphatidylserine, phosphatidylcholine and galactosylceramide (By similarity). Does not exhibit calcium-activated chloride channel (CaCC) activity (PubMed:22178883). Can inhibit the activity of ANO1 (PubMed:20056604, PubMed:22946059).</text>
</comment>
<comment type="catalytic activity">
    <reaction evidence="1">
        <text>a 1,2-diacyl-sn-glycero-3-phospho-L-serine(in) = a 1,2-diacyl-sn-glycero-3-phospho-L-serine(out)</text>
        <dbReference type="Rhea" id="RHEA:38663"/>
        <dbReference type="ChEBI" id="CHEBI:57262"/>
    </reaction>
    <physiologicalReaction direction="left-to-right" evidence="1">
        <dbReference type="Rhea" id="RHEA:38664"/>
    </physiologicalReaction>
</comment>
<comment type="catalytic activity">
    <reaction evidence="1">
        <text>a beta-D-galactosyl-(1&lt;-&gt;1')-N-acylsphing-4-enine(out) = a beta-D-galactosyl-(1&lt;-&gt;1')-N-acylsphing-4-enine(in)</text>
        <dbReference type="Rhea" id="RHEA:38899"/>
        <dbReference type="ChEBI" id="CHEBI:18390"/>
    </reaction>
    <physiologicalReaction direction="left-to-right" evidence="1">
        <dbReference type="Rhea" id="RHEA:38900"/>
    </physiologicalReaction>
</comment>
<comment type="catalytic activity">
    <reaction evidence="1">
        <text>a 1,2-diacyl-sn-glycero-3-phosphocholine(in) = a 1,2-diacyl-sn-glycero-3-phosphocholine(out)</text>
        <dbReference type="Rhea" id="RHEA:38571"/>
        <dbReference type="ChEBI" id="CHEBI:57643"/>
    </reaction>
    <physiologicalReaction direction="right-to-left" evidence="1">
        <dbReference type="Rhea" id="RHEA:38573"/>
    </physiologicalReaction>
</comment>
<comment type="catalytic activity">
    <reaction evidence="10 12">
        <text>Ca(2+)(in) = Ca(2+)(out)</text>
        <dbReference type="Rhea" id="RHEA:29671"/>
        <dbReference type="ChEBI" id="CHEBI:29108"/>
    </reaction>
</comment>
<comment type="catalytic activity">
    <reaction evidence="1">
        <text>Na(+)(in) = Na(+)(out)</text>
        <dbReference type="Rhea" id="RHEA:34963"/>
        <dbReference type="ChEBI" id="CHEBI:29101"/>
    </reaction>
</comment>
<comment type="catalytic activity">
    <reaction evidence="1">
        <text>K(+)(in) = K(+)(out)</text>
        <dbReference type="Rhea" id="RHEA:29463"/>
        <dbReference type="ChEBI" id="CHEBI:29103"/>
    </reaction>
</comment>
<comment type="activity regulation">
    <text evidence="10">Cation channel activity is activated via phosphorylation on serine residues by cAMP-dependent protein kinase A (PKA).</text>
</comment>
<comment type="interaction">
    <interactant intactId="EBI-3843564">
        <id>A1A5B4</id>
    </interactant>
    <interactant intactId="EBI-357481">
        <id>Q12959</id>
        <label>DLG1</label>
    </interactant>
    <organismsDiffer>false</organismsDiffer>
    <experiments>2</experiments>
</comment>
<comment type="interaction">
    <interactant intactId="EBI-3843564">
        <id>A1A5B4</id>
    </interactant>
    <interactant intactId="EBI-742388">
        <id>Q9H8W4</id>
        <label>PLEKHF2</label>
    </interactant>
    <organismsDiffer>false</organismsDiffer>
    <experiments>3</experiments>
</comment>
<comment type="subcellular location">
    <subcellularLocation>
        <location evidence="7 9 10">Cell membrane</location>
        <topology evidence="2">Multi-pass membrane protein</topology>
    </subcellularLocation>
    <subcellularLocation>
        <location evidence="12">Endoplasmic reticulum</location>
    </subcellularLocation>
    <text>Shows predominantly an intracellular localization with a weak expression in the cell membrane.</text>
</comment>
<comment type="alternative products">
    <event type="alternative splicing"/>
    <isoform>
        <id>A1A5B4-1</id>
        <name>1</name>
        <sequence type="displayed"/>
    </isoform>
    <isoform>
        <id>A1A5B4-2</id>
        <name>2</name>
        <sequence type="described" ref="VSP_036489 VSP_036492"/>
    </isoform>
    <isoform>
        <id>A1A5B4-3</id>
        <name>3</name>
        <sequence type="described" ref="VSP_036490 VSP_036491"/>
    </isoform>
</comment>
<comment type="tissue specificity">
    <text evidence="11 12">Expressed in the kidney (PubMed:36520003). Expressed in the olfactory epithelium (PubMed:36330924).</text>
</comment>
<comment type="PTM">
    <text evidence="10">Phosphorylated on serine residues by cAMP-dependent protein kinase A (PKA) which is essential for activation of its cation channel activity.</text>
</comment>
<comment type="miscellaneous">
    <text>The term 'anoctamin' was coined because these channels are anion selective and have eight (OCT) transmembrane segments. There is some dissatisfaction in the field with the Ano nomenclature because it is not certain that all the members of this family are anion channels or have the 8-transmembrane topology.</text>
</comment>
<comment type="similarity">
    <text evidence="14">Belongs to the anoctamin family.</text>
</comment>
<comment type="sequence caution" evidence="14">
    <conflict type="miscellaneous discrepancy">
        <sequence resource="EMBL-CDS" id="BAB84914"/>
    </conflict>
    <text>Intron retention.</text>
</comment>
<feature type="chain" id="PRO_0000289329" description="Anoctamin-9">
    <location>
        <begin position="1"/>
        <end position="782"/>
    </location>
</feature>
<feature type="topological domain" description="Cytoplasmic" evidence="2">
    <location>
        <begin position="1"/>
        <end position="198"/>
    </location>
</feature>
<feature type="transmembrane region" description="Helical" evidence="2">
    <location>
        <begin position="199"/>
        <end position="219"/>
    </location>
</feature>
<feature type="topological domain" description="Extracellular" evidence="2">
    <location>
        <begin position="220"/>
        <end position="264"/>
    </location>
</feature>
<feature type="transmembrane region" description="Helical" evidence="2">
    <location>
        <begin position="265"/>
        <end position="285"/>
    </location>
</feature>
<feature type="topological domain" description="Cytoplasmic" evidence="2">
    <location>
        <begin position="286"/>
        <end position="331"/>
    </location>
</feature>
<feature type="transmembrane region" description="Helical" evidence="2">
    <location>
        <begin position="332"/>
        <end position="352"/>
    </location>
</feature>
<feature type="topological domain" description="Extracellular" evidence="2">
    <location>
        <begin position="353"/>
        <end position="373"/>
    </location>
</feature>
<feature type="transmembrane region" description="Helical" evidence="2">
    <location>
        <begin position="374"/>
        <end position="394"/>
    </location>
</feature>
<feature type="topological domain" description="Cytoplasmic" evidence="2">
    <location>
        <begin position="395"/>
        <end position="423"/>
    </location>
</feature>
<feature type="transmembrane region" description="Helical" evidence="2">
    <location>
        <begin position="424"/>
        <end position="444"/>
    </location>
</feature>
<feature type="topological domain" description="Extracellular" evidence="2">
    <location>
        <begin position="445"/>
        <end position="552"/>
    </location>
</feature>
<feature type="transmembrane region" description="Helical" evidence="2">
    <location>
        <begin position="553"/>
        <end position="573"/>
    </location>
</feature>
<feature type="topological domain" description="Cytoplasmic" evidence="2">
    <location>
        <begin position="574"/>
        <end position="604"/>
    </location>
</feature>
<feature type="transmembrane region" description="Helical" evidence="2">
    <location>
        <begin position="605"/>
        <end position="625"/>
    </location>
</feature>
<feature type="topological domain" description="Extracellular" evidence="2">
    <location>
        <begin position="626"/>
        <end position="703"/>
    </location>
</feature>
<feature type="transmembrane region" description="Helical" evidence="2">
    <location>
        <begin position="704"/>
        <end position="724"/>
    </location>
</feature>
<feature type="topological domain" description="Cytoplasmic" evidence="2">
    <location>
        <begin position="725"/>
        <end position="782"/>
    </location>
</feature>
<feature type="region of interest" description="Disordered" evidence="3">
    <location>
        <begin position="756"/>
        <end position="782"/>
    </location>
</feature>
<feature type="modified residue" description="Phosphoserine; by PKA" evidence="1">
    <location>
        <position position="250"/>
    </location>
</feature>
<feature type="glycosylation site" description="N-linked (GlcNAc...) asparagine" evidence="2">
    <location>
        <position position="641"/>
    </location>
</feature>
<feature type="glycosylation site" description="N-linked (GlcNAc...) asparagine" evidence="2">
    <location>
        <position position="652"/>
    </location>
</feature>
<feature type="glycosylation site" description="N-linked (GlcNAc...) asparagine" evidence="2">
    <location>
        <position position="674"/>
    </location>
</feature>
<feature type="glycosylation site" description="N-linked (GlcNAc...) asparagine" evidence="2">
    <location>
        <position position="690"/>
    </location>
</feature>
<feature type="splice variant" id="VSP_036489" description="In isoform 2." evidence="13">
    <location>
        <begin position="1"/>
        <end position="299"/>
    </location>
</feature>
<feature type="splice variant" id="VSP_036490" description="In isoform 3." evidence="13">
    <original>GEGRLKKTWARWRHMFREQPVDEIRNYFGEK</original>
    <variation>VRGGPAWRGPWGGTLGWGLSLSVTRARGRDA</variation>
    <location>
        <begin position="156"/>
        <end position="186"/>
    </location>
</feature>
<feature type="splice variant" id="VSP_036491" description="In isoform 3." evidence="13">
    <location>
        <begin position="187"/>
        <end position="782"/>
    </location>
</feature>
<feature type="splice variant" id="VSP_036492" description="In isoform 2." evidence="13">
    <original>VWDEEQ</original>
    <variation>MPAVSE</variation>
    <location>
        <begin position="300"/>
        <end position="305"/>
    </location>
</feature>
<feature type="sequence variant" id="VAR_054621" description="In dbSNP:rs7395065." evidence="5 6">
    <original>L</original>
    <variation>F</variation>
    <location>
        <position position="93"/>
    </location>
</feature>
<feature type="sequence variant" id="VAR_032617" description="In dbSNP:rs10794324." evidence="4 5 6">
    <original>I</original>
    <variation>V</variation>
    <location>
        <position position="391"/>
    </location>
</feature>
<feature type="sequence variant" id="VAR_032618" description="In dbSNP:rs10794323." evidence="4 5 6">
    <original>C</original>
    <variation>R</variation>
    <location>
        <position position="399"/>
    </location>
</feature>
<feature type="sequence variant" id="VAR_089329" description="Impaired calcium-permeable ion channel activity; dbSNP:rs114405390." evidence="12">
    <original>T</original>
    <variation>A</variation>
    <location>
        <position position="604"/>
    </location>
</feature>
<gene>
    <name type="primary">ANO9</name>
    <name type="synonym">PIG5</name>
    <name type="synonym">TMEM16J</name>
    <name type="synonym">TP53I5</name>
</gene>